<protein>
    <recommendedName>
        <fullName>UPF0754 membrane protein Tery_3973</fullName>
    </recommendedName>
</protein>
<accession>Q10XM6</accession>
<feature type="chain" id="PRO_0000388329" description="UPF0754 membrane protein Tery_3973">
    <location>
        <begin position="1"/>
        <end position="408"/>
    </location>
</feature>
<feature type="transmembrane region" description="Helical" evidence="2">
    <location>
        <begin position="4"/>
        <end position="24"/>
    </location>
</feature>
<feature type="transmembrane region" description="Helical" evidence="2">
    <location>
        <begin position="385"/>
        <end position="405"/>
    </location>
</feature>
<gene>
    <name type="ordered locus">Tery_3973</name>
</gene>
<keyword id="KW-0997">Cell inner membrane</keyword>
<keyword id="KW-1003">Cell membrane</keyword>
<keyword id="KW-0472">Membrane</keyword>
<keyword id="KW-0812">Transmembrane</keyword>
<keyword id="KW-1133">Transmembrane helix</keyword>
<name>Y3973_TRIEI</name>
<reference key="1">
    <citation type="journal article" date="2015" name="Proc. Natl. Acad. Sci. U.S.A.">
        <title>Trichodesmium genome maintains abundant, widespread noncoding DNA in situ, despite oligotrophic lifestyle.</title>
        <authorList>
            <person name="Walworth N."/>
            <person name="Pfreundt U."/>
            <person name="Nelson W.C."/>
            <person name="Mincer T."/>
            <person name="Heidelberg J.F."/>
            <person name="Fu F."/>
            <person name="Waterbury J.B."/>
            <person name="Glavina del Rio T."/>
            <person name="Goodwin L."/>
            <person name="Kyrpides N.C."/>
            <person name="Land M.L."/>
            <person name="Woyke T."/>
            <person name="Hutchins D.A."/>
            <person name="Hess W.R."/>
            <person name="Webb E.A."/>
        </authorList>
    </citation>
    <scope>NUCLEOTIDE SEQUENCE [LARGE SCALE GENOMIC DNA]</scope>
    <source>
        <strain>IMS101</strain>
    </source>
</reference>
<sequence>MSNIWLYFVPPIAGGIIGYFTNDIAIKMLFRPYRPYYIFRRKLPFTPGLIPANQERLAKRVADTIMGSLLTPSELQNLARRLLQTERMEAAILWLLQMSLDQLKLNTDTKSTKILANILRDLLGQSLPRLLKVWAKREYFLEAQINQIFDQILLEFQLTEIQAAQLSDWLLKVVVPPDVLRKTLIDFLTDQNISIIDEGFREKASGTYWVVANLFGLRNTLTRLRTFCLDERDLTNQRLMELITALAVKERITEWLHSLSMQNLPVSTVRELRNTMQNSVRLYLQENGTDLIQALSLSVAWEHIADLIINRLQASSIMNSSLELVSRELALILERYLERDLENIVALAIPILNIDQVIIDRIKGTSAEELEVAVNVIVKNELQAIVNLGGVLGVVVGSFQTILLVLQR</sequence>
<evidence type="ECO:0000250" key="1"/>
<evidence type="ECO:0000255" key="2"/>
<evidence type="ECO:0000305" key="3"/>
<organism>
    <name type="scientific">Trichodesmium erythraeum (strain IMS101)</name>
    <dbReference type="NCBI Taxonomy" id="203124"/>
    <lineage>
        <taxon>Bacteria</taxon>
        <taxon>Bacillati</taxon>
        <taxon>Cyanobacteriota</taxon>
        <taxon>Cyanophyceae</taxon>
        <taxon>Oscillatoriophycideae</taxon>
        <taxon>Oscillatoriales</taxon>
        <taxon>Microcoleaceae</taxon>
        <taxon>Trichodesmium</taxon>
    </lineage>
</organism>
<comment type="subcellular location">
    <subcellularLocation>
        <location evidence="1">Cell inner membrane</location>
        <topology evidence="1">Multi-pass membrane protein</topology>
    </subcellularLocation>
</comment>
<comment type="similarity">
    <text evidence="3">Belongs to the UPF0754 family.</text>
</comment>
<proteinExistence type="inferred from homology"/>
<dbReference type="EMBL" id="CP000393">
    <property type="protein sequence ID" value="ABG52998.1"/>
    <property type="molecule type" value="Genomic_DNA"/>
</dbReference>
<dbReference type="RefSeq" id="WP_011613328.1">
    <property type="nucleotide sequence ID" value="NC_008312.1"/>
</dbReference>
<dbReference type="STRING" id="203124.Tery_3973"/>
<dbReference type="KEGG" id="ter:Tery_3973"/>
<dbReference type="eggNOG" id="COG4399">
    <property type="taxonomic scope" value="Bacteria"/>
</dbReference>
<dbReference type="HOGENOM" id="CLU_042384_0_0_3"/>
<dbReference type="OrthoDB" id="9787430at2"/>
<dbReference type="GO" id="GO:0005886">
    <property type="term" value="C:plasma membrane"/>
    <property type="evidence" value="ECO:0007669"/>
    <property type="project" value="UniProtKB-SubCell"/>
</dbReference>
<dbReference type="InterPro" id="IPR007383">
    <property type="entry name" value="DUF445"/>
</dbReference>
<dbReference type="InterPro" id="IPR016991">
    <property type="entry name" value="UCP032178"/>
</dbReference>
<dbReference type="PANTHER" id="PTHR35791">
    <property type="entry name" value="UPF0754 MEMBRANE PROTEIN YHEB"/>
    <property type="match status" value="1"/>
</dbReference>
<dbReference type="PANTHER" id="PTHR35791:SF1">
    <property type="entry name" value="UPF0754 MEMBRANE PROTEIN YHEB"/>
    <property type="match status" value="1"/>
</dbReference>
<dbReference type="Pfam" id="PF04286">
    <property type="entry name" value="DUF445"/>
    <property type="match status" value="1"/>
</dbReference>
<dbReference type="PIRSF" id="PIRSF032178">
    <property type="entry name" value="UCP032178"/>
    <property type="match status" value="1"/>
</dbReference>